<sequence length="272" mass="30045">MFDIIKAVIIGIVEGLTEFLPISSTGHIDLVNHVIKLSQSQDFISMFEYVIQFGAILAVVLLYFNKLNPFSKPTAKARNATWQLWAKVIIAVLPSAVVGLPLNSWMDEHLHTPIVVATTLIVYGILFIILENYLKNKSAHITTLADITYQTALLIGLFQVLSIVPGTSRSGATILGALLIGTSRYVATEFSFFLAIPTMVGVLIIKIGKYLWQGNGFSGEQWAVLMTGSIVSFLVAIVAIKWLLKFVQTHDFKPFGWYRIALGAIVLLVMFI</sequence>
<evidence type="ECO:0000255" key="1">
    <source>
        <dbReference type="HAMAP-Rule" id="MF_01006"/>
    </source>
</evidence>
<proteinExistence type="inferred from homology"/>
<protein>
    <recommendedName>
        <fullName evidence="1">Undecaprenyl-diphosphatase</fullName>
        <ecNumber evidence="1">3.6.1.27</ecNumber>
    </recommendedName>
    <alternativeName>
        <fullName evidence="1">Bacitracin resistance protein</fullName>
    </alternativeName>
    <alternativeName>
        <fullName evidence="1">Undecaprenyl pyrophosphate phosphatase</fullName>
    </alternativeName>
</protein>
<gene>
    <name evidence="1" type="primary">uppP</name>
    <name type="ordered locus">LCABL_10200</name>
</gene>
<organism>
    <name type="scientific">Lacticaseibacillus casei (strain BL23)</name>
    <name type="common">Lactobacillus casei</name>
    <dbReference type="NCBI Taxonomy" id="543734"/>
    <lineage>
        <taxon>Bacteria</taxon>
        <taxon>Bacillati</taxon>
        <taxon>Bacillota</taxon>
        <taxon>Bacilli</taxon>
        <taxon>Lactobacillales</taxon>
        <taxon>Lactobacillaceae</taxon>
        <taxon>Lacticaseibacillus</taxon>
    </lineage>
</organism>
<feature type="chain" id="PRO_1000197377" description="Undecaprenyl-diphosphatase">
    <location>
        <begin position="1"/>
        <end position="272"/>
    </location>
</feature>
<feature type="transmembrane region" description="Helical" evidence="1">
    <location>
        <begin position="2"/>
        <end position="22"/>
    </location>
</feature>
<feature type="transmembrane region" description="Helical" evidence="1">
    <location>
        <begin position="43"/>
        <end position="63"/>
    </location>
</feature>
<feature type="transmembrane region" description="Helical" evidence="1">
    <location>
        <begin position="82"/>
        <end position="102"/>
    </location>
</feature>
<feature type="transmembrane region" description="Helical" evidence="1">
    <location>
        <begin position="110"/>
        <end position="130"/>
    </location>
</feature>
<feature type="transmembrane region" description="Helical" evidence="1">
    <location>
        <begin position="185"/>
        <end position="205"/>
    </location>
</feature>
<feature type="transmembrane region" description="Helical" evidence="1">
    <location>
        <begin position="224"/>
        <end position="244"/>
    </location>
</feature>
<feature type="transmembrane region" description="Helical" evidence="1">
    <location>
        <begin position="252"/>
        <end position="272"/>
    </location>
</feature>
<name>UPPP_LACCB</name>
<keyword id="KW-0046">Antibiotic resistance</keyword>
<keyword id="KW-1003">Cell membrane</keyword>
<keyword id="KW-0133">Cell shape</keyword>
<keyword id="KW-0961">Cell wall biogenesis/degradation</keyword>
<keyword id="KW-0378">Hydrolase</keyword>
<keyword id="KW-0472">Membrane</keyword>
<keyword id="KW-0573">Peptidoglycan synthesis</keyword>
<keyword id="KW-0812">Transmembrane</keyword>
<keyword id="KW-1133">Transmembrane helix</keyword>
<dbReference type="EC" id="3.6.1.27" evidence="1"/>
<dbReference type="EMBL" id="FM177140">
    <property type="protein sequence ID" value="CAQ66106.1"/>
    <property type="molecule type" value="Genomic_DNA"/>
</dbReference>
<dbReference type="SMR" id="B3WCK5"/>
<dbReference type="KEGG" id="lcb:LCABL_10200"/>
<dbReference type="HOGENOM" id="CLU_060296_2_0_9"/>
<dbReference type="GO" id="GO:0005886">
    <property type="term" value="C:plasma membrane"/>
    <property type="evidence" value="ECO:0007669"/>
    <property type="project" value="UniProtKB-SubCell"/>
</dbReference>
<dbReference type="GO" id="GO:0050380">
    <property type="term" value="F:undecaprenyl-diphosphatase activity"/>
    <property type="evidence" value="ECO:0007669"/>
    <property type="project" value="UniProtKB-UniRule"/>
</dbReference>
<dbReference type="GO" id="GO:0071555">
    <property type="term" value="P:cell wall organization"/>
    <property type="evidence" value="ECO:0007669"/>
    <property type="project" value="UniProtKB-KW"/>
</dbReference>
<dbReference type="GO" id="GO:0009252">
    <property type="term" value="P:peptidoglycan biosynthetic process"/>
    <property type="evidence" value="ECO:0007669"/>
    <property type="project" value="UniProtKB-KW"/>
</dbReference>
<dbReference type="GO" id="GO:0008360">
    <property type="term" value="P:regulation of cell shape"/>
    <property type="evidence" value="ECO:0007669"/>
    <property type="project" value="UniProtKB-KW"/>
</dbReference>
<dbReference type="GO" id="GO:0046677">
    <property type="term" value="P:response to antibiotic"/>
    <property type="evidence" value="ECO:0007669"/>
    <property type="project" value="UniProtKB-UniRule"/>
</dbReference>
<dbReference type="HAMAP" id="MF_01006">
    <property type="entry name" value="Undec_diphosphatase"/>
    <property type="match status" value="1"/>
</dbReference>
<dbReference type="InterPro" id="IPR003824">
    <property type="entry name" value="UppP"/>
</dbReference>
<dbReference type="NCBIfam" id="NF001389">
    <property type="entry name" value="PRK00281.1-2"/>
    <property type="match status" value="1"/>
</dbReference>
<dbReference type="NCBIfam" id="NF001390">
    <property type="entry name" value="PRK00281.1-4"/>
    <property type="match status" value="1"/>
</dbReference>
<dbReference type="NCBIfam" id="NF001391">
    <property type="entry name" value="PRK00281.1-5"/>
    <property type="match status" value="1"/>
</dbReference>
<dbReference type="NCBIfam" id="TIGR00753">
    <property type="entry name" value="undec_PP_bacA"/>
    <property type="match status" value="1"/>
</dbReference>
<dbReference type="PANTHER" id="PTHR30622">
    <property type="entry name" value="UNDECAPRENYL-DIPHOSPHATASE"/>
    <property type="match status" value="1"/>
</dbReference>
<dbReference type="PANTHER" id="PTHR30622:SF3">
    <property type="entry name" value="UNDECAPRENYL-DIPHOSPHATASE"/>
    <property type="match status" value="1"/>
</dbReference>
<dbReference type="Pfam" id="PF02673">
    <property type="entry name" value="BacA"/>
    <property type="match status" value="1"/>
</dbReference>
<reference key="1">
    <citation type="submission" date="2008-06" db="EMBL/GenBank/DDBJ databases">
        <title>Lactobacillus casei BL23 complete genome sequence.</title>
        <authorList>
            <person name="Maze A."/>
            <person name="Boel G."/>
            <person name="Bourand A."/>
            <person name="Loux V."/>
            <person name="Gibrat J.F."/>
            <person name="Zuniga M."/>
            <person name="Hartke A."/>
            <person name="Deutscher J."/>
        </authorList>
    </citation>
    <scope>NUCLEOTIDE SEQUENCE [LARGE SCALE GENOMIC DNA]</scope>
    <source>
        <strain>BL23</strain>
    </source>
</reference>
<accession>B3WCK5</accession>
<comment type="function">
    <text evidence="1">Catalyzes the dephosphorylation of undecaprenyl diphosphate (UPP). Confers resistance to bacitracin.</text>
</comment>
<comment type="catalytic activity">
    <reaction evidence="1">
        <text>di-trans,octa-cis-undecaprenyl diphosphate + H2O = di-trans,octa-cis-undecaprenyl phosphate + phosphate + H(+)</text>
        <dbReference type="Rhea" id="RHEA:28094"/>
        <dbReference type="ChEBI" id="CHEBI:15377"/>
        <dbReference type="ChEBI" id="CHEBI:15378"/>
        <dbReference type="ChEBI" id="CHEBI:43474"/>
        <dbReference type="ChEBI" id="CHEBI:58405"/>
        <dbReference type="ChEBI" id="CHEBI:60392"/>
        <dbReference type="EC" id="3.6.1.27"/>
    </reaction>
</comment>
<comment type="subcellular location">
    <subcellularLocation>
        <location evidence="1">Cell membrane</location>
        <topology evidence="1">Multi-pass membrane protein</topology>
    </subcellularLocation>
</comment>
<comment type="miscellaneous">
    <text>Bacitracin is thought to be involved in the inhibition of peptidoglycan synthesis by sequestering undecaprenyl diphosphate, thereby reducing the pool of lipid carrier available.</text>
</comment>
<comment type="similarity">
    <text evidence="1">Belongs to the UppP family.</text>
</comment>